<comment type="catalytic activity">
    <reaction evidence="1">
        <text>(2R)-3-phosphoglycerate + ATP = (2R)-3-phospho-glyceroyl phosphate + ADP</text>
        <dbReference type="Rhea" id="RHEA:14801"/>
        <dbReference type="ChEBI" id="CHEBI:30616"/>
        <dbReference type="ChEBI" id="CHEBI:57604"/>
        <dbReference type="ChEBI" id="CHEBI:58272"/>
        <dbReference type="ChEBI" id="CHEBI:456216"/>
        <dbReference type="EC" id="2.7.2.3"/>
    </reaction>
</comment>
<comment type="pathway">
    <text evidence="1">Carbohydrate degradation; glycolysis; pyruvate from D-glyceraldehyde 3-phosphate: step 2/5.</text>
</comment>
<comment type="subunit">
    <text evidence="1">Monomer.</text>
</comment>
<comment type="subcellular location">
    <subcellularLocation>
        <location evidence="1">Cytoplasm</location>
    </subcellularLocation>
</comment>
<comment type="similarity">
    <text evidence="1">Belongs to the phosphoglycerate kinase family.</text>
</comment>
<reference key="1">
    <citation type="journal article" date="2004" name="Nucleic Acids Res.">
        <title>Whole genome comparisons of serotype 4b and 1/2a strains of the food-borne pathogen Listeria monocytogenes reveal new insights into the core genome components of this species.</title>
        <authorList>
            <person name="Nelson K.E."/>
            <person name="Fouts D.E."/>
            <person name="Mongodin E.F."/>
            <person name="Ravel J."/>
            <person name="DeBoy R.T."/>
            <person name="Kolonay J.F."/>
            <person name="Rasko D.A."/>
            <person name="Angiuoli S.V."/>
            <person name="Gill S.R."/>
            <person name="Paulsen I.T."/>
            <person name="Peterson J.D."/>
            <person name="White O."/>
            <person name="Nelson W.C."/>
            <person name="Nierman W.C."/>
            <person name="Beanan M.J."/>
            <person name="Brinkac L.M."/>
            <person name="Daugherty S.C."/>
            <person name="Dodson R.J."/>
            <person name="Durkin A.S."/>
            <person name="Madupu R."/>
            <person name="Haft D.H."/>
            <person name="Selengut J."/>
            <person name="Van Aken S.E."/>
            <person name="Khouri H.M."/>
            <person name="Fedorova N."/>
            <person name="Forberger H.A."/>
            <person name="Tran B."/>
            <person name="Kathariou S."/>
            <person name="Wonderling L.D."/>
            <person name="Uhlich G.A."/>
            <person name="Bayles D.O."/>
            <person name="Luchansky J.B."/>
            <person name="Fraser C.M."/>
        </authorList>
    </citation>
    <scope>NUCLEOTIDE SEQUENCE [LARGE SCALE GENOMIC DNA]</scope>
    <source>
        <strain>F2365</strain>
    </source>
</reference>
<keyword id="KW-0067">ATP-binding</keyword>
<keyword id="KW-0963">Cytoplasm</keyword>
<keyword id="KW-0324">Glycolysis</keyword>
<keyword id="KW-0418">Kinase</keyword>
<keyword id="KW-0547">Nucleotide-binding</keyword>
<keyword id="KW-0808">Transferase</keyword>
<protein>
    <recommendedName>
        <fullName evidence="1">Phosphoglycerate kinase</fullName>
        <ecNumber evidence="1">2.7.2.3</ecNumber>
    </recommendedName>
</protein>
<organism>
    <name type="scientific">Listeria monocytogenes serotype 4b (strain F2365)</name>
    <dbReference type="NCBI Taxonomy" id="265669"/>
    <lineage>
        <taxon>Bacteria</taxon>
        <taxon>Bacillati</taxon>
        <taxon>Bacillota</taxon>
        <taxon>Bacilli</taxon>
        <taxon>Bacillales</taxon>
        <taxon>Listeriaceae</taxon>
        <taxon>Listeria</taxon>
    </lineage>
</organism>
<feature type="chain" id="PRO_0000145961" description="Phosphoglycerate kinase">
    <location>
        <begin position="1"/>
        <end position="396"/>
    </location>
</feature>
<feature type="binding site" evidence="1">
    <location>
        <begin position="21"/>
        <end position="23"/>
    </location>
    <ligand>
        <name>substrate</name>
    </ligand>
</feature>
<feature type="binding site" evidence="1">
    <location>
        <position position="36"/>
    </location>
    <ligand>
        <name>substrate</name>
    </ligand>
</feature>
<feature type="binding site" evidence="1">
    <location>
        <begin position="59"/>
        <end position="62"/>
    </location>
    <ligand>
        <name>substrate</name>
    </ligand>
</feature>
<feature type="binding site" evidence="1">
    <location>
        <position position="119"/>
    </location>
    <ligand>
        <name>substrate</name>
    </ligand>
</feature>
<feature type="binding site" evidence="1">
    <location>
        <position position="156"/>
    </location>
    <ligand>
        <name>substrate</name>
    </ligand>
</feature>
<feature type="binding site" evidence="1">
    <location>
        <position position="206"/>
    </location>
    <ligand>
        <name>ATP</name>
        <dbReference type="ChEBI" id="CHEBI:30616"/>
    </ligand>
</feature>
<feature type="binding site" evidence="1">
    <location>
        <position position="294"/>
    </location>
    <ligand>
        <name>ATP</name>
        <dbReference type="ChEBI" id="CHEBI:30616"/>
    </ligand>
</feature>
<feature type="binding site" evidence="1">
    <location>
        <position position="325"/>
    </location>
    <ligand>
        <name>ATP</name>
        <dbReference type="ChEBI" id="CHEBI:30616"/>
    </ligand>
</feature>
<feature type="binding site" evidence="1">
    <location>
        <begin position="352"/>
        <end position="355"/>
    </location>
    <ligand>
        <name>ATP</name>
        <dbReference type="ChEBI" id="CHEBI:30616"/>
    </ligand>
</feature>
<name>PGK_LISMF</name>
<dbReference type="EC" id="2.7.2.3" evidence="1"/>
<dbReference type="EMBL" id="AE017262">
    <property type="protein sequence ID" value="AAT05197.1"/>
    <property type="molecule type" value="Genomic_DNA"/>
</dbReference>
<dbReference type="RefSeq" id="WP_010959052.1">
    <property type="nucleotide sequence ID" value="NC_002973.6"/>
</dbReference>
<dbReference type="SMR" id="Q71WW8"/>
<dbReference type="KEGG" id="lmf:LMOf2365_2431"/>
<dbReference type="HOGENOM" id="CLU_025427_0_2_9"/>
<dbReference type="UniPathway" id="UPA00109">
    <property type="reaction ID" value="UER00185"/>
</dbReference>
<dbReference type="GO" id="GO:0005829">
    <property type="term" value="C:cytosol"/>
    <property type="evidence" value="ECO:0007669"/>
    <property type="project" value="TreeGrafter"/>
</dbReference>
<dbReference type="GO" id="GO:0043531">
    <property type="term" value="F:ADP binding"/>
    <property type="evidence" value="ECO:0007669"/>
    <property type="project" value="TreeGrafter"/>
</dbReference>
<dbReference type="GO" id="GO:0005524">
    <property type="term" value="F:ATP binding"/>
    <property type="evidence" value="ECO:0007669"/>
    <property type="project" value="UniProtKB-KW"/>
</dbReference>
<dbReference type="GO" id="GO:0004618">
    <property type="term" value="F:phosphoglycerate kinase activity"/>
    <property type="evidence" value="ECO:0007669"/>
    <property type="project" value="UniProtKB-UniRule"/>
</dbReference>
<dbReference type="GO" id="GO:0006094">
    <property type="term" value="P:gluconeogenesis"/>
    <property type="evidence" value="ECO:0007669"/>
    <property type="project" value="TreeGrafter"/>
</dbReference>
<dbReference type="GO" id="GO:0006096">
    <property type="term" value="P:glycolytic process"/>
    <property type="evidence" value="ECO:0007669"/>
    <property type="project" value="UniProtKB-UniRule"/>
</dbReference>
<dbReference type="CDD" id="cd00318">
    <property type="entry name" value="Phosphoglycerate_kinase"/>
    <property type="match status" value="1"/>
</dbReference>
<dbReference type="FunFam" id="3.40.50.1260:FF:000001">
    <property type="entry name" value="Phosphoglycerate kinase"/>
    <property type="match status" value="1"/>
</dbReference>
<dbReference type="FunFam" id="3.40.50.1260:FF:000008">
    <property type="entry name" value="Phosphoglycerate kinase"/>
    <property type="match status" value="1"/>
</dbReference>
<dbReference type="Gene3D" id="3.40.50.1260">
    <property type="entry name" value="Phosphoglycerate kinase, N-terminal domain"/>
    <property type="match status" value="2"/>
</dbReference>
<dbReference type="HAMAP" id="MF_00145">
    <property type="entry name" value="Phosphoglyc_kinase"/>
    <property type="match status" value="1"/>
</dbReference>
<dbReference type="InterPro" id="IPR001576">
    <property type="entry name" value="Phosphoglycerate_kinase"/>
</dbReference>
<dbReference type="InterPro" id="IPR015911">
    <property type="entry name" value="Phosphoglycerate_kinase_CS"/>
</dbReference>
<dbReference type="InterPro" id="IPR015824">
    <property type="entry name" value="Phosphoglycerate_kinase_N"/>
</dbReference>
<dbReference type="InterPro" id="IPR036043">
    <property type="entry name" value="Phosphoglycerate_kinase_sf"/>
</dbReference>
<dbReference type="PANTHER" id="PTHR11406">
    <property type="entry name" value="PHOSPHOGLYCERATE KINASE"/>
    <property type="match status" value="1"/>
</dbReference>
<dbReference type="PANTHER" id="PTHR11406:SF23">
    <property type="entry name" value="PHOSPHOGLYCERATE KINASE 1, CHLOROPLASTIC-RELATED"/>
    <property type="match status" value="1"/>
</dbReference>
<dbReference type="Pfam" id="PF00162">
    <property type="entry name" value="PGK"/>
    <property type="match status" value="1"/>
</dbReference>
<dbReference type="PIRSF" id="PIRSF000724">
    <property type="entry name" value="Pgk"/>
    <property type="match status" value="1"/>
</dbReference>
<dbReference type="PRINTS" id="PR00477">
    <property type="entry name" value="PHGLYCKINASE"/>
</dbReference>
<dbReference type="SUPFAM" id="SSF53748">
    <property type="entry name" value="Phosphoglycerate kinase"/>
    <property type="match status" value="1"/>
</dbReference>
<dbReference type="PROSITE" id="PS00111">
    <property type="entry name" value="PGLYCERATE_KINASE"/>
    <property type="match status" value="1"/>
</dbReference>
<proteinExistence type="inferred from homology"/>
<sequence length="396" mass="42075">MAKKVVTDLDLKDKKVLVRVDFNVPMKDGKITNDNRIVAALPTIEYILEQNGKAILFSHLGKVKTEEDKEGKSLRPVAARLSELLGKEVKFVPTTRGPELEKAIDELKDGEVLLFENTRFEDIDGKKESKNDPELGKYWASLGDVFVNDAFGTAHRAHASNVGIASNLESAAGFLMEKEIKFIGGVVDNPARPLVAILGGAKVSDKIGVIENLLTKADKVLVGGGMTFTFMAAQGQEIGKSLLEADKVELAKGLLEKAGNKLVLPVDAVVSKEFSNDAPFHTVSADSIPADEMGLDIGQATIDLFTKELQGAKTVVWNGPMGVFELSNFAKGTIGVCEAIANLTDATTIIGGGDSAAAAMDLGFADKFTHISTGGGASLEYLEGKELPGVASISDK</sequence>
<gene>
    <name evidence="1" type="primary">pgk</name>
    <name type="ordered locus">LMOf2365_2431</name>
</gene>
<evidence type="ECO:0000255" key="1">
    <source>
        <dbReference type="HAMAP-Rule" id="MF_00145"/>
    </source>
</evidence>
<accession>Q71WW8</accession>